<protein>
    <recommendedName>
        <fullName evidence="1">Small ribosomal subunit protein bS20</fullName>
    </recommendedName>
    <alternativeName>
        <fullName evidence="2">30S ribosomal protein S20</fullName>
    </alternativeName>
</protein>
<proteinExistence type="inferred from homology"/>
<dbReference type="EMBL" id="CP000230">
    <property type="protein sequence ID" value="ABC24596.1"/>
    <property type="molecule type" value="Genomic_DNA"/>
</dbReference>
<dbReference type="RefSeq" id="WP_011391549.1">
    <property type="nucleotide sequence ID" value="NC_007643.1"/>
</dbReference>
<dbReference type="RefSeq" id="YP_428883.1">
    <property type="nucleotide sequence ID" value="NC_007643.1"/>
</dbReference>
<dbReference type="SMR" id="Q2RMP9"/>
<dbReference type="STRING" id="269796.Rru_A3802"/>
<dbReference type="DNASU" id="3837259"/>
<dbReference type="EnsemblBacteria" id="ABC24596">
    <property type="protein sequence ID" value="ABC24596"/>
    <property type="gene ID" value="Rru_A3802"/>
</dbReference>
<dbReference type="KEGG" id="rru:Rru_A3802"/>
<dbReference type="PATRIC" id="fig|269796.9.peg.3924"/>
<dbReference type="eggNOG" id="COG0268">
    <property type="taxonomic scope" value="Bacteria"/>
</dbReference>
<dbReference type="HOGENOM" id="CLU_160655_3_0_5"/>
<dbReference type="PhylomeDB" id="Q2RMP9"/>
<dbReference type="Proteomes" id="UP000001929">
    <property type="component" value="Chromosome"/>
</dbReference>
<dbReference type="GO" id="GO:0015935">
    <property type="term" value="C:small ribosomal subunit"/>
    <property type="evidence" value="ECO:0007669"/>
    <property type="project" value="TreeGrafter"/>
</dbReference>
<dbReference type="GO" id="GO:0070181">
    <property type="term" value="F:small ribosomal subunit rRNA binding"/>
    <property type="evidence" value="ECO:0007669"/>
    <property type="project" value="TreeGrafter"/>
</dbReference>
<dbReference type="GO" id="GO:0003735">
    <property type="term" value="F:structural constituent of ribosome"/>
    <property type="evidence" value="ECO:0007669"/>
    <property type="project" value="InterPro"/>
</dbReference>
<dbReference type="GO" id="GO:0006412">
    <property type="term" value="P:translation"/>
    <property type="evidence" value="ECO:0007669"/>
    <property type="project" value="UniProtKB-UniRule"/>
</dbReference>
<dbReference type="FunFam" id="1.20.58.110:FF:000001">
    <property type="entry name" value="30S ribosomal protein S20"/>
    <property type="match status" value="1"/>
</dbReference>
<dbReference type="Gene3D" id="1.20.58.110">
    <property type="entry name" value="Ribosomal protein S20"/>
    <property type="match status" value="1"/>
</dbReference>
<dbReference type="HAMAP" id="MF_00500">
    <property type="entry name" value="Ribosomal_bS20"/>
    <property type="match status" value="1"/>
</dbReference>
<dbReference type="InterPro" id="IPR002583">
    <property type="entry name" value="Ribosomal_bS20"/>
</dbReference>
<dbReference type="InterPro" id="IPR036510">
    <property type="entry name" value="Ribosomal_bS20_sf"/>
</dbReference>
<dbReference type="NCBIfam" id="TIGR00029">
    <property type="entry name" value="S20"/>
    <property type="match status" value="1"/>
</dbReference>
<dbReference type="PANTHER" id="PTHR33398">
    <property type="entry name" value="30S RIBOSOMAL PROTEIN S20"/>
    <property type="match status" value="1"/>
</dbReference>
<dbReference type="PANTHER" id="PTHR33398:SF1">
    <property type="entry name" value="SMALL RIBOSOMAL SUBUNIT PROTEIN BS20C"/>
    <property type="match status" value="1"/>
</dbReference>
<dbReference type="Pfam" id="PF01649">
    <property type="entry name" value="Ribosomal_S20p"/>
    <property type="match status" value="1"/>
</dbReference>
<dbReference type="SUPFAM" id="SSF46992">
    <property type="entry name" value="Ribosomal protein S20"/>
    <property type="match status" value="1"/>
</dbReference>
<feature type="chain" id="PRO_0000236449" description="Small ribosomal subunit protein bS20">
    <location>
        <begin position="1"/>
        <end position="88"/>
    </location>
</feature>
<reference key="1">
    <citation type="journal article" date="2011" name="Stand. Genomic Sci.">
        <title>Complete genome sequence of Rhodospirillum rubrum type strain (S1).</title>
        <authorList>
            <person name="Munk A.C."/>
            <person name="Copeland A."/>
            <person name="Lucas S."/>
            <person name="Lapidus A."/>
            <person name="Del Rio T.G."/>
            <person name="Barry K."/>
            <person name="Detter J.C."/>
            <person name="Hammon N."/>
            <person name="Israni S."/>
            <person name="Pitluck S."/>
            <person name="Brettin T."/>
            <person name="Bruce D."/>
            <person name="Han C."/>
            <person name="Tapia R."/>
            <person name="Gilna P."/>
            <person name="Schmutz J."/>
            <person name="Larimer F."/>
            <person name="Land M."/>
            <person name="Kyrpides N.C."/>
            <person name="Mavromatis K."/>
            <person name="Richardson P."/>
            <person name="Rohde M."/>
            <person name="Goeker M."/>
            <person name="Klenk H.P."/>
            <person name="Zhang Y."/>
            <person name="Roberts G.P."/>
            <person name="Reslewic S."/>
            <person name="Schwartz D.C."/>
        </authorList>
    </citation>
    <scope>NUCLEOTIDE SEQUENCE [LARGE SCALE GENOMIC DNA]</scope>
    <source>
        <strain>ATCC 11170 / ATH 1.1.1 / DSM 467 / LMG 4362 / NCIMB 8255 / S1</strain>
    </source>
</reference>
<organism>
    <name type="scientific">Rhodospirillum rubrum (strain ATCC 11170 / ATH 1.1.1 / DSM 467 / LMG 4362 / NCIMB 8255 / S1)</name>
    <dbReference type="NCBI Taxonomy" id="269796"/>
    <lineage>
        <taxon>Bacteria</taxon>
        <taxon>Pseudomonadati</taxon>
        <taxon>Pseudomonadota</taxon>
        <taxon>Alphaproteobacteria</taxon>
        <taxon>Rhodospirillales</taxon>
        <taxon>Rhodospirillaceae</taxon>
        <taxon>Rhodospirillum</taxon>
    </lineage>
</organism>
<sequence>MANHKSAKKRILRNASRSEINHARIGRIRTFVKKVEAAIASGDKDAAKAAFQIAMPEVQRGVTKGVLHQNTASRKISRLSARIKAIGA</sequence>
<accession>Q2RMP9</accession>
<comment type="function">
    <text evidence="1">Binds directly to 16S ribosomal RNA.</text>
</comment>
<comment type="similarity">
    <text evidence="1">Belongs to the bacterial ribosomal protein bS20 family.</text>
</comment>
<name>RS20_RHORT</name>
<evidence type="ECO:0000255" key="1">
    <source>
        <dbReference type="HAMAP-Rule" id="MF_00500"/>
    </source>
</evidence>
<evidence type="ECO:0000305" key="2"/>
<gene>
    <name evidence="1" type="primary">rpsT</name>
    <name type="ordered locus">Rru_A3802</name>
</gene>
<keyword id="KW-1185">Reference proteome</keyword>
<keyword id="KW-0687">Ribonucleoprotein</keyword>
<keyword id="KW-0689">Ribosomal protein</keyword>
<keyword id="KW-0694">RNA-binding</keyword>
<keyword id="KW-0699">rRNA-binding</keyword>